<accession>A8AHU0</accession>
<comment type="function">
    <text evidence="1">Cleaves the N-terminal amino acid of tripeptides.</text>
</comment>
<comment type="catalytic activity">
    <reaction evidence="1">
        <text>Release of the N-terminal residue from a tripeptide.</text>
        <dbReference type="EC" id="3.4.11.4"/>
    </reaction>
</comment>
<comment type="cofactor">
    <cofactor evidence="1">
        <name>Zn(2+)</name>
        <dbReference type="ChEBI" id="CHEBI:29105"/>
    </cofactor>
    <text evidence="1">Binds 2 Zn(2+) ions per subunit.</text>
</comment>
<comment type="subcellular location">
    <subcellularLocation>
        <location evidence="1">Cytoplasm</location>
    </subcellularLocation>
</comment>
<comment type="similarity">
    <text evidence="1">Belongs to the peptidase M20B family.</text>
</comment>
<dbReference type="EC" id="3.4.11.4" evidence="1"/>
<dbReference type="EMBL" id="CP000822">
    <property type="protein sequence ID" value="ABV13053.1"/>
    <property type="molecule type" value="Genomic_DNA"/>
</dbReference>
<dbReference type="RefSeq" id="WP_012132790.1">
    <property type="nucleotide sequence ID" value="NC_009792.1"/>
</dbReference>
<dbReference type="SMR" id="A8AHU0"/>
<dbReference type="STRING" id="290338.CKO_01926"/>
<dbReference type="MEROPS" id="M20.003"/>
<dbReference type="GeneID" id="45135908"/>
<dbReference type="KEGG" id="cko:CKO_01926"/>
<dbReference type="HOGENOM" id="CLU_053676_0_0_6"/>
<dbReference type="OrthoDB" id="9804934at2"/>
<dbReference type="Proteomes" id="UP000008148">
    <property type="component" value="Chromosome"/>
</dbReference>
<dbReference type="GO" id="GO:0005829">
    <property type="term" value="C:cytosol"/>
    <property type="evidence" value="ECO:0007669"/>
    <property type="project" value="TreeGrafter"/>
</dbReference>
<dbReference type="GO" id="GO:0008237">
    <property type="term" value="F:metallopeptidase activity"/>
    <property type="evidence" value="ECO:0007669"/>
    <property type="project" value="UniProtKB-KW"/>
</dbReference>
<dbReference type="GO" id="GO:0045148">
    <property type="term" value="F:tripeptide aminopeptidase activity"/>
    <property type="evidence" value="ECO:0007669"/>
    <property type="project" value="UniProtKB-UniRule"/>
</dbReference>
<dbReference type="GO" id="GO:0008270">
    <property type="term" value="F:zinc ion binding"/>
    <property type="evidence" value="ECO:0007669"/>
    <property type="project" value="UniProtKB-UniRule"/>
</dbReference>
<dbReference type="GO" id="GO:0043171">
    <property type="term" value="P:peptide catabolic process"/>
    <property type="evidence" value="ECO:0007669"/>
    <property type="project" value="UniProtKB-UniRule"/>
</dbReference>
<dbReference type="GO" id="GO:0006508">
    <property type="term" value="P:proteolysis"/>
    <property type="evidence" value="ECO:0007669"/>
    <property type="project" value="UniProtKB-UniRule"/>
</dbReference>
<dbReference type="CDD" id="cd03892">
    <property type="entry name" value="M20_peptT"/>
    <property type="match status" value="1"/>
</dbReference>
<dbReference type="FunFam" id="3.30.70.360:FF:000002">
    <property type="entry name" value="Peptidase T"/>
    <property type="match status" value="1"/>
</dbReference>
<dbReference type="Gene3D" id="3.30.70.360">
    <property type="match status" value="1"/>
</dbReference>
<dbReference type="Gene3D" id="3.40.630.10">
    <property type="entry name" value="Zn peptidases"/>
    <property type="match status" value="1"/>
</dbReference>
<dbReference type="HAMAP" id="MF_00550">
    <property type="entry name" value="Aminopeptidase_M20"/>
    <property type="match status" value="1"/>
</dbReference>
<dbReference type="InterPro" id="IPR001261">
    <property type="entry name" value="ArgE/DapE_CS"/>
</dbReference>
<dbReference type="InterPro" id="IPR036264">
    <property type="entry name" value="Bact_exopeptidase_dim_dom"/>
</dbReference>
<dbReference type="InterPro" id="IPR002933">
    <property type="entry name" value="Peptidase_M20"/>
</dbReference>
<dbReference type="InterPro" id="IPR011650">
    <property type="entry name" value="Peptidase_M20_dimer"/>
</dbReference>
<dbReference type="InterPro" id="IPR010161">
    <property type="entry name" value="Peptidase_M20B"/>
</dbReference>
<dbReference type="NCBIfam" id="TIGR01882">
    <property type="entry name" value="peptidase-T"/>
    <property type="match status" value="1"/>
</dbReference>
<dbReference type="NCBIfam" id="NF003976">
    <property type="entry name" value="PRK05469.1"/>
    <property type="match status" value="1"/>
</dbReference>
<dbReference type="NCBIfam" id="NF009920">
    <property type="entry name" value="PRK13381.1"/>
    <property type="match status" value="1"/>
</dbReference>
<dbReference type="PANTHER" id="PTHR42994">
    <property type="entry name" value="PEPTIDASE T"/>
    <property type="match status" value="1"/>
</dbReference>
<dbReference type="PANTHER" id="PTHR42994:SF1">
    <property type="entry name" value="PEPTIDASE T"/>
    <property type="match status" value="1"/>
</dbReference>
<dbReference type="Pfam" id="PF07687">
    <property type="entry name" value="M20_dimer"/>
    <property type="match status" value="1"/>
</dbReference>
<dbReference type="Pfam" id="PF01546">
    <property type="entry name" value="Peptidase_M20"/>
    <property type="match status" value="1"/>
</dbReference>
<dbReference type="PIRSF" id="PIRSF037215">
    <property type="entry name" value="Peptidase_M20B"/>
    <property type="match status" value="1"/>
</dbReference>
<dbReference type="SUPFAM" id="SSF55031">
    <property type="entry name" value="Bacterial exopeptidase dimerisation domain"/>
    <property type="match status" value="1"/>
</dbReference>
<dbReference type="SUPFAM" id="SSF53187">
    <property type="entry name" value="Zn-dependent exopeptidases"/>
    <property type="match status" value="1"/>
</dbReference>
<dbReference type="PROSITE" id="PS00758">
    <property type="entry name" value="ARGE_DAPE_CPG2_1"/>
    <property type="match status" value="1"/>
</dbReference>
<dbReference type="PROSITE" id="PS00759">
    <property type="entry name" value="ARGE_DAPE_CPG2_2"/>
    <property type="match status" value="1"/>
</dbReference>
<protein>
    <recommendedName>
        <fullName evidence="1">Peptidase T</fullName>
        <ecNumber evidence="1">3.4.11.4</ecNumber>
    </recommendedName>
    <alternativeName>
        <fullName evidence="1">Aminotripeptidase</fullName>
        <shortName evidence="1">Tripeptidase</shortName>
    </alternativeName>
    <alternativeName>
        <fullName evidence="1">Tripeptide aminopeptidase</fullName>
    </alternativeName>
</protein>
<reference key="1">
    <citation type="submission" date="2007-08" db="EMBL/GenBank/DDBJ databases">
        <authorList>
            <consortium name="The Citrobacter koseri Genome Sequencing Project"/>
            <person name="McClelland M."/>
            <person name="Sanderson E.K."/>
            <person name="Porwollik S."/>
            <person name="Spieth J."/>
            <person name="Clifton W.S."/>
            <person name="Latreille P."/>
            <person name="Courtney L."/>
            <person name="Wang C."/>
            <person name="Pepin K."/>
            <person name="Bhonagiri V."/>
            <person name="Nash W."/>
            <person name="Johnson M."/>
            <person name="Thiruvilangam P."/>
            <person name="Wilson R."/>
        </authorList>
    </citation>
    <scope>NUCLEOTIDE SEQUENCE [LARGE SCALE GENOMIC DNA]</scope>
    <source>
        <strain>ATCC BAA-895 / CDC 4225-83 / SGSC4696</strain>
    </source>
</reference>
<organism>
    <name type="scientific">Citrobacter koseri (strain ATCC BAA-895 / CDC 4225-83 / SGSC4696)</name>
    <dbReference type="NCBI Taxonomy" id="290338"/>
    <lineage>
        <taxon>Bacteria</taxon>
        <taxon>Pseudomonadati</taxon>
        <taxon>Pseudomonadota</taxon>
        <taxon>Gammaproteobacteria</taxon>
        <taxon>Enterobacterales</taxon>
        <taxon>Enterobacteriaceae</taxon>
        <taxon>Citrobacter</taxon>
    </lineage>
</organism>
<feature type="chain" id="PRO_1000017839" description="Peptidase T">
    <location>
        <begin position="1"/>
        <end position="408"/>
    </location>
</feature>
<feature type="active site" evidence="1">
    <location>
        <position position="80"/>
    </location>
</feature>
<feature type="active site" description="Proton acceptor" evidence="1">
    <location>
        <position position="173"/>
    </location>
</feature>
<feature type="binding site" evidence="1">
    <location>
        <position position="78"/>
    </location>
    <ligand>
        <name>Zn(2+)</name>
        <dbReference type="ChEBI" id="CHEBI:29105"/>
        <label>1</label>
    </ligand>
</feature>
<feature type="binding site" evidence="1">
    <location>
        <position position="140"/>
    </location>
    <ligand>
        <name>Zn(2+)</name>
        <dbReference type="ChEBI" id="CHEBI:29105"/>
        <label>1</label>
    </ligand>
</feature>
<feature type="binding site" evidence="1">
    <location>
        <position position="140"/>
    </location>
    <ligand>
        <name>Zn(2+)</name>
        <dbReference type="ChEBI" id="CHEBI:29105"/>
        <label>2</label>
    </ligand>
</feature>
<feature type="binding site" evidence="1">
    <location>
        <position position="174"/>
    </location>
    <ligand>
        <name>Zn(2+)</name>
        <dbReference type="ChEBI" id="CHEBI:29105"/>
        <label>2</label>
    </ligand>
</feature>
<feature type="binding site" evidence="1">
    <location>
        <position position="196"/>
    </location>
    <ligand>
        <name>Zn(2+)</name>
        <dbReference type="ChEBI" id="CHEBI:29105"/>
        <label>1</label>
    </ligand>
</feature>
<feature type="binding site" evidence="1">
    <location>
        <position position="379"/>
    </location>
    <ligand>
        <name>Zn(2+)</name>
        <dbReference type="ChEBI" id="CHEBI:29105"/>
        <label>2</label>
    </ligand>
</feature>
<keyword id="KW-0031">Aminopeptidase</keyword>
<keyword id="KW-0963">Cytoplasm</keyword>
<keyword id="KW-0378">Hydrolase</keyword>
<keyword id="KW-0479">Metal-binding</keyword>
<keyword id="KW-0482">Metalloprotease</keyword>
<keyword id="KW-0645">Protease</keyword>
<keyword id="KW-1185">Reference proteome</keyword>
<keyword id="KW-0862">Zinc</keyword>
<gene>
    <name evidence="1" type="primary">pepT</name>
    <name type="ordered locus">CKO_01926</name>
</gene>
<sequence length="408" mass="44752">MDKLLERFLHYVSLDTQSKAGVRQVPSTEGQWKLLHLLKQQLEEMGLVNVTLSDKGTVMVTLPANVAGDIPAIGFISHVDTSPDFSGKNVNPQIVENYRGGDIALGIGDEVLSPVMFPVLHQLLGQTLITTDGKTLLGADDKAGVAEIMTALAVLKQKDIPHGDIRVAFTPDEEVGKGAKHFDVEAFGAQWAYTVDGGGVGELEFENFNAASVNIKIVGNNVHPGTAKGVMVNALSLAARIHAEVPADESPETTEGYEGFYHLASMKGTVDRADMHYIIRDFDRKQFEARKRKMMEIAKKVGKGLHPDCYIELVIEDSYYNMREKVVEHPHILDIAQQAMRDCDIVPDMKPIRGGTDGAQLSFMGLPCPNLFTGGYNYHGKHEFVTLEGMEKAVQVIVRIAELTAKQQ</sequence>
<name>PEPT_CITK8</name>
<evidence type="ECO:0000255" key="1">
    <source>
        <dbReference type="HAMAP-Rule" id="MF_00550"/>
    </source>
</evidence>
<proteinExistence type="inferred from homology"/>